<dbReference type="EMBL" id="AF518242">
    <property type="protein sequence ID" value="AAQ08314.1"/>
    <property type="molecule type" value="Genomic_DNA"/>
</dbReference>
<dbReference type="RefSeq" id="NP_001002287.1">
    <property type="nucleotide sequence ID" value="NM_001002287.1"/>
</dbReference>
<dbReference type="SMR" id="Q7TN45"/>
<dbReference type="FunCoup" id="Q7TN45">
    <property type="interactions" value="32"/>
</dbReference>
<dbReference type="STRING" id="10116.ENSRNOP00000043206"/>
<dbReference type="GlyCosmos" id="Q7TN45">
    <property type="glycosylation" value="1 site, No reported glycans"/>
</dbReference>
<dbReference type="GlyGen" id="Q7TN45">
    <property type="glycosylation" value="2 sites"/>
</dbReference>
<dbReference type="PaxDb" id="10116-ENSRNOP00000043206"/>
<dbReference type="GeneID" id="404658"/>
<dbReference type="KEGG" id="rno:404658"/>
<dbReference type="UCSC" id="RGD:738043">
    <property type="organism name" value="rat"/>
</dbReference>
<dbReference type="AGR" id="RGD:738043"/>
<dbReference type="CTD" id="233230"/>
<dbReference type="RGD" id="738043">
    <property type="gene designation" value="Mrgprb4"/>
</dbReference>
<dbReference type="VEuPathDB" id="HostDB:ENSRNOG00000033021"/>
<dbReference type="eggNOG" id="ENOG502RTWA">
    <property type="taxonomic scope" value="Eukaryota"/>
</dbReference>
<dbReference type="HOGENOM" id="CLU_009579_4_1_1"/>
<dbReference type="InParanoid" id="Q7TN45"/>
<dbReference type="OrthoDB" id="9631784at2759"/>
<dbReference type="PhylomeDB" id="Q7TN45"/>
<dbReference type="TreeFam" id="TF336336"/>
<dbReference type="PRO" id="PR:Q7TN45"/>
<dbReference type="Proteomes" id="UP000002494">
    <property type="component" value="Chromosome 1"/>
</dbReference>
<dbReference type="GO" id="GO:0005886">
    <property type="term" value="C:plasma membrane"/>
    <property type="evidence" value="ECO:0000318"/>
    <property type="project" value="GO_Central"/>
</dbReference>
<dbReference type="GO" id="GO:0004930">
    <property type="term" value="F:G protein-coupled receptor activity"/>
    <property type="evidence" value="ECO:0000318"/>
    <property type="project" value="GO_Central"/>
</dbReference>
<dbReference type="GO" id="GO:0007186">
    <property type="term" value="P:G protein-coupled receptor signaling pathway"/>
    <property type="evidence" value="ECO:0000318"/>
    <property type="project" value="GO_Central"/>
</dbReference>
<dbReference type="CDD" id="cd15107">
    <property type="entry name" value="7tmA_MrgprB"/>
    <property type="match status" value="1"/>
</dbReference>
<dbReference type="FunFam" id="1.20.1070.10:FF:000140">
    <property type="entry name" value="Mas-related G-protein coupled receptor member X2"/>
    <property type="match status" value="1"/>
</dbReference>
<dbReference type="Gene3D" id="1.20.1070.10">
    <property type="entry name" value="Rhodopsin 7-helix transmembrane proteins"/>
    <property type="match status" value="1"/>
</dbReference>
<dbReference type="InterPro" id="IPR000276">
    <property type="entry name" value="GPCR_Rhodpsn"/>
</dbReference>
<dbReference type="InterPro" id="IPR017452">
    <property type="entry name" value="GPCR_Rhodpsn_7TM"/>
</dbReference>
<dbReference type="InterPro" id="IPR026234">
    <property type="entry name" value="MRGPCRFAMILY"/>
</dbReference>
<dbReference type="PANTHER" id="PTHR11334">
    <property type="entry name" value="MAS-RELATED G-PROTEIN COUPLED RECEPTOR"/>
    <property type="match status" value="1"/>
</dbReference>
<dbReference type="PANTHER" id="PTHR11334:SF36">
    <property type="entry name" value="MAS-RELATED G-PROTEIN COUPLED RECEPTOR MEMBER B4-RELATED"/>
    <property type="match status" value="1"/>
</dbReference>
<dbReference type="Pfam" id="PF00001">
    <property type="entry name" value="7tm_1"/>
    <property type="match status" value="1"/>
</dbReference>
<dbReference type="PRINTS" id="PR00237">
    <property type="entry name" value="GPCRRHODOPSN"/>
</dbReference>
<dbReference type="PRINTS" id="PR02108">
    <property type="entry name" value="MRGPCRFAMILY"/>
</dbReference>
<dbReference type="SUPFAM" id="SSF81321">
    <property type="entry name" value="Family A G protein-coupled receptor-like"/>
    <property type="match status" value="1"/>
</dbReference>
<dbReference type="PROSITE" id="PS00237">
    <property type="entry name" value="G_PROTEIN_RECEP_F1_1"/>
    <property type="match status" value="1"/>
</dbReference>
<dbReference type="PROSITE" id="PS50262">
    <property type="entry name" value="G_PROTEIN_RECEP_F1_2"/>
    <property type="match status" value="1"/>
</dbReference>
<comment type="function">
    <text evidence="1">Orphan receptor. Probably involved in the function of nociceptive neurons. May regulate nociceptor function and/or development, including the sensation or modulation of pain (By similarity).</text>
</comment>
<comment type="subcellular location">
    <subcellularLocation>
        <location evidence="6">Membrane</location>
        <topology evidence="6">Multi-pass membrane protein</topology>
    </subcellularLocation>
</comment>
<comment type="tissue specificity">
    <text evidence="5">Expressed strongly in newborn dorsal root ganglia, adult dorsal root ganglia and trigeminal ganlia.</text>
</comment>
<comment type="similarity">
    <text evidence="3">Belongs to the G-protein coupled receptor 1 family. Mas subfamily.</text>
</comment>
<feature type="chain" id="PRO_0000305300" description="Mas-related G-protein coupled receptor member B4">
    <location>
        <begin position="1"/>
        <end position="323"/>
    </location>
</feature>
<feature type="topological domain" description="Extracellular" evidence="2">
    <location>
        <begin position="1"/>
        <end position="34"/>
    </location>
</feature>
<feature type="transmembrane region" description="Helical; Name=1" evidence="2">
    <location>
        <begin position="35"/>
        <end position="55"/>
    </location>
</feature>
<feature type="topological domain" description="Cytoplasmic" evidence="2">
    <location>
        <begin position="56"/>
        <end position="63"/>
    </location>
</feature>
<feature type="transmembrane region" description="Helical; Name=2" evidence="2">
    <location>
        <begin position="64"/>
        <end position="84"/>
    </location>
</feature>
<feature type="topological domain" description="Extracellular" evidence="2">
    <location>
        <begin position="85"/>
        <end position="98"/>
    </location>
</feature>
<feature type="transmembrane region" description="Helical; Name=3" evidence="2">
    <location>
        <begin position="99"/>
        <end position="119"/>
    </location>
</feature>
<feature type="topological domain" description="Cytoplasmic" evidence="2">
    <location>
        <begin position="120"/>
        <end position="147"/>
    </location>
</feature>
<feature type="transmembrane region" description="Helical; Name=4" evidence="2">
    <location>
        <begin position="148"/>
        <end position="168"/>
    </location>
</feature>
<feature type="topological domain" description="Extracellular" evidence="2">
    <location>
        <begin position="169"/>
        <end position="180"/>
    </location>
</feature>
<feature type="transmembrane region" description="Helical; Name=5" evidence="2">
    <location>
        <begin position="181"/>
        <end position="201"/>
    </location>
</feature>
<feature type="topological domain" description="Cytoplasmic" evidence="2">
    <location>
        <begin position="202"/>
        <end position="224"/>
    </location>
</feature>
<feature type="transmembrane region" description="Helical; Name=6" evidence="2">
    <location>
        <begin position="225"/>
        <end position="245"/>
    </location>
</feature>
<feature type="topological domain" description="Extracellular" evidence="2">
    <location>
        <begin position="246"/>
        <end position="255"/>
    </location>
</feature>
<feature type="transmembrane region" description="Helical; Name=7" evidence="2">
    <location>
        <begin position="256"/>
        <end position="276"/>
    </location>
</feature>
<feature type="topological domain" description="Cytoplasmic" evidence="2">
    <location>
        <begin position="277"/>
        <end position="323"/>
    </location>
</feature>
<feature type="region of interest" description="Disordered" evidence="4">
    <location>
        <begin position="298"/>
        <end position="323"/>
    </location>
</feature>
<feature type="compositionally biased region" description="Basic and acidic residues" evidence="4">
    <location>
        <begin position="312"/>
        <end position="323"/>
    </location>
</feature>
<feature type="glycosylation site" description="N-linked (GlcNAc...) asparagine" evidence="2">
    <location>
        <position position="11"/>
    </location>
</feature>
<sequence length="323" mass="36787">MSPTTQAWSINNTVVKENYYTEILSCITTFNTLNFLIVIISVVGMAGNATVLWLLGFHMHRNAFSVYVLNLAGADFLYLCAQTVYSLECVLQFDNSYFYFLLTILMFNYLAGFCMIAAISTERCLSVTWPIWYHCQRPRHTSATVCALFWAFSLLLSLLLGQGCGFLFSKFDYSFCRYCNFIATAFLIVIFMVLFVSSLALLAKIICGSHRIPVTRFYVTIALTVLVFIFFGLPIGICVFLLPWIHMMLSSFFYEMVTLLSCVNSCANPIIYFFVGSIRHHRLQRQTLKLLLQRAMQDTPEEEGGERGPSQKSEDLEVVRCSS</sequence>
<name>MRGB4_RAT</name>
<proteinExistence type="evidence at transcript level"/>
<organism>
    <name type="scientific">Rattus norvegicus</name>
    <name type="common">Rat</name>
    <dbReference type="NCBI Taxonomy" id="10116"/>
    <lineage>
        <taxon>Eukaryota</taxon>
        <taxon>Metazoa</taxon>
        <taxon>Chordata</taxon>
        <taxon>Craniata</taxon>
        <taxon>Vertebrata</taxon>
        <taxon>Euteleostomi</taxon>
        <taxon>Mammalia</taxon>
        <taxon>Eutheria</taxon>
        <taxon>Euarchontoglires</taxon>
        <taxon>Glires</taxon>
        <taxon>Rodentia</taxon>
        <taxon>Myomorpha</taxon>
        <taxon>Muroidea</taxon>
        <taxon>Muridae</taxon>
        <taxon>Murinae</taxon>
        <taxon>Rattus</taxon>
    </lineage>
</organism>
<protein>
    <recommendedName>
        <fullName>Mas-related G-protein coupled receptor member B4</fullName>
    </recommendedName>
</protein>
<keyword id="KW-0297">G-protein coupled receptor</keyword>
<keyword id="KW-0325">Glycoprotein</keyword>
<keyword id="KW-0472">Membrane</keyword>
<keyword id="KW-0675">Receptor</keyword>
<keyword id="KW-1185">Reference proteome</keyword>
<keyword id="KW-0807">Transducer</keyword>
<keyword id="KW-0812">Transmembrane</keyword>
<keyword id="KW-1133">Transmembrane helix</keyword>
<gene>
    <name type="primary">Mrgprb4</name>
    <name type="synonym">Mrgb4</name>
</gene>
<evidence type="ECO:0000250" key="1"/>
<evidence type="ECO:0000255" key="2"/>
<evidence type="ECO:0000255" key="3">
    <source>
        <dbReference type="PROSITE-ProRule" id="PRU00521"/>
    </source>
</evidence>
<evidence type="ECO:0000256" key="4">
    <source>
        <dbReference type="SAM" id="MobiDB-lite"/>
    </source>
</evidence>
<evidence type="ECO:0000269" key="5">
    <source>
    </source>
</evidence>
<evidence type="ECO:0000305" key="6"/>
<accession>Q7TN45</accession>
<reference key="1">
    <citation type="journal article" date="2003" name="Proc. Natl. Acad. Sci. U.S.A.">
        <title>Atypical expansion in mice of the sensory neuron-specific Mrg G protein-coupled receptor family.</title>
        <authorList>
            <person name="Zylka M.J."/>
            <person name="Dong X."/>
            <person name="Southwell A.L."/>
            <person name="Anderson D.J."/>
        </authorList>
    </citation>
    <scope>NUCLEOTIDE SEQUENCE [GENOMIC DNA]</scope>
    <scope>TISSUE SPECIFICITY</scope>
    <source>
        <strain>Sprague-Dawley</strain>
    </source>
</reference>